<protein>
    <recommendedName>
        <fullName evidence="1">Protein NrdI</fullName>
    </recommendedName>
</protein>
<dbReference type="EMBL" id="AP009324">
    <property type="protein sequence ID" value="BAF77610.1"/>
    <property type="molecule type" value="Genomic_DNA"/>
</dbReference>
<dbReference type="RefSeq" id="WP_000692521.1">
    <property type="nucleotide sequence ID" value="NZ_CTYB01000002.1"/>
</dbReference>
<dbReference type="SMR" id="A7WZL9"/>
<dbReference type="KEGG" id="saw:SAHV_0727"/>
<dbReference type="HOGENOM" id="CLU_114845_3_0_9"/>
<dbReference type="GO" id="GO:0010181">
    <property type="term" value="F:FMN binding"/>
    <property type="evidence" value="ECO:0007669"/>
    <property type="project" value="InterPro"/>
</dbReference>
<dbReference type="GO" id="GO:0036211">
    <property type="term" value="P:protein modification process"/>
    <property type="evidence" value="ECO:0007669"/>
    <property type="project" value="InterPro"/>
</dbReference>
<dbReference type="Gene3D" id="3.40.50.360">
    <property type="match status" value="1"/>
</dbReference>
<dbReference type="HAMAP" id="MF_00128">
    <property type="entry name" value="NrdI"/>
    <property type="match status" value="1"/>
</dbReference>
<dbReference type="InterPro" id="IPR029039">
    <property type="entry name" value="Flavoprotein-like_sf"/>
</dbReference>
<dbReference type="InterPro" id="IPR020852">
    <property type="entry name" value="RNR_Ib_NrdI_bac"/>
</dbReference>
<dbReference type="InterPro" id="IPR004465">
    <property type="entry name" value="RNR_NrdI"/>
</dbReference>
<dbReference type="NCBIfam" id="TIGR00333">
    <property type="entry name" value="nrdI"/>
    <property type="match status" value="1"/>
</dbReference>
<dbReference type="PANTHER" id="PTHR37297">
    <property type="entry name" value="PROTEIN NRDI"/>
    <property type="match status" value="1"/>
</dbReference>
<dbReference type="PANTHER" id="PTHR37297:SF1">
    <property type="entry name" value="PROTEIN NRDI"/>
    <property type="match status" value="1"/>
</dbReference>
<dbReference type="Pfam" id="PF07972">
    <property type="entry name" value="Flavodoxin_NdrI"/>
    <property type="match status" value="1"/>
</dbReference>
<dbReference type="PIRSF" id="PIRSF005087">
    <property type="entry name" value="NrdI"/>
    <property type="match status" value="1"/>
</dbReference>
<dbReference type="SUPFAM" id="SSF52218">
    <property type="entry name" value="Flavoproteins"/>
    <property type="match status" value="1"/>
</dbReference>
<comment type="function">
    <text evidence="1">Probably involved in ribonucleotide reductase function.</text>
</comment>
<comment type="similarity">
    <text evidence="1">Belongs to the NrdI family.</text>
</comment>
<evidence type="ECO:0000255" key="1">
    <source>
        <dbReference type="HAMAP-Rule" id="MF_00128"/>
    </source>
</evidence>
<reference key="1">
    <citation type="journal article" date="2008" name="Antimicrob. Agents Chemother.">
        <title>Mutated response regulator graR is responsible for phenotypic conversion of Staphylococcus aureus from heterogeneous vancomycin-intermediate resistance to vancomycin-intermediate resistance.</title>
        <authorList>
            <person name="Neoh H.-M."/>
            <person name="Cui L."/>
            <person name="Yuzawa H."/>
            <person name="Takeuchi F."/>
            <person name="Matsuo M."/>
            <person name="Hiramatsu K."/>
        </authorList>
    </citation>
    <scope>NUCLEOTIDE SEQUENCE [LARGE SCALE GENOMIC DNA]</scope>
    <source>
        <strain>Mu3 / ATCC 700698</strain>
    </source>
</reference>
<name>NRDI_STAA1</name>
<accession>A7WZL9</accession>
<feature type="chain" id="PRO_1000016525" description="Protein NrdI">
    <location>
        <begin position="1"/>
        <end position="132"/>
    </location>
</feature>
<gene>
    <name evidence="1" type="primary">nrdI</name>
    <name type="ordered locus">SAHV_0727</name>
</gene>
<proteinExistence type="inferred from homology"/>
<sequence>MKIIYFSFTGNVRRFIKRTELENTLEITAENCMEPVHEPFIIVTGTIGFGEVPEPVQSFLEVNHQYIRGVAASGNRNWGLNFAKAGRTISEEYNVPLLMKFELHGKNKDVIEFKNKVGNFNENHGREKVQSY</sequence>
<organism>
    <name type="scientific">Staphylococcus aureus (strain Mu3 / ATCC 700698)</name>
    <dbReference type="NCBI Taxonomy" id="418127"/>
    <lineage>
        <taxon>Bacteria</taxon>
        <taxon>Bacillati</taxon>
        <taxon>Bacillota</taxon>
        <taxon>Bacilli</taxon>
        <taxon>Bacillales</taxon>
        <taxon>Staphylococcaceae</taxon>
        <taxon>Staphylococcus</taxon>
    </lineage>
</organism>